<evidence type="ECO:0000255" key="1">
    <source>
        <dbReference type="HAMAP-Rule" id="MF_00187"/>
    </source>
</evidence>
<feature type="chain" id="PRO_0000152938" description="Sulfur carrier protein FdhD">
    <location>
        <begin position="1"/>
        <end position="262"/>
    </location>
</feature>
<feature type="active site" description="Cysteine persulfide intermediate" evidence="1">
    <location>
        <position position="105"/>
    </location>
</feature>
<feature type="binding site" evidence="1">
    <location>
        <begin position="246"/>
        <end position="251"/>
    </location>
    <ligand>
        <name>Mo-bis(molybdopterin guanine dinucleotide)</name>
        <dbReference type="ChEBI" id="CHEBI:60539"/>
    </ligand>
</feature>
<proteinExistence type="inferred from homology"/>
<dbReference type="EMBL" id="AE017261">
    <property type="protein sequence ID" value="AAT43622.1"/>
    <property type="molecule type" value="Genomic_DNA"/>
</dbReference>
<dbReference type="RefSeq" id="WP_011177838.1">
    <property type="nucleotide sequence ID" value="NC_005877.1"/>
</dbReference>
<dbReference type="SMR" id="Q6L080"/>
<dbReference type="STRING" id="263820.PTO1037"/>
<dbReference type="PaxDb" id="263820-PTO1037"/>
<dbReference type="GeneID" id="2844403"/>
<dbReference type="KEGG" id="pto:PTO1037"/>
<dbReference type="PATRIC" id="fig|263820.9.peg.1076"/>
<dbReference type="eggNOG" id="arCOG04358">
    <property type="taxonomic scope" value="Archaea"/>
</dbReference>
<dbReference type="HOGENOM" id="CLU_056887_3_0_2"/>
<dbReference type="InParanoid" id="Q6L080"/>
<dbReference type="OrthoDB" id="57189at2157"/>
<dbReference type="Proteomes" id="UP000000438">
    <property type="component" value="Chromosome"/>
</dbReference>
<dbReference type="GO" id="GO:0005737">
    <property type="term" value="C:cytoplasm"/>
    <property type="evidence" value="ECO:0007669"/>
    <property type="project" value="UniProtKB-SubCell"/>
</dbReference>
<dbReference type="GO" id="GO:0097163">
    <property type="term" value="F:sulfur carrier activity"/>
    <property type="evidence" value="ECO:0007669"/>
    <property type="project" value="UniProtKB-UniRule"/>
</dbReference>
<dbReference type="GO" id="GO:0016783">
    <property type="term" value="F:sulfurtransferase activity"/>
    <property type="evidence" value="ECO:0007669"/>
    <property type="project" value="InterPro"/>
</dbReference>
<dbReference type="GO" id="GO:0006777">
    <property type="term" value="P:Mo-molybdopterin cofactor biosynthetic process"/>
    <property type="evidence" value="ECO:0007669"/>
    <property type="project" value="UniProtKB-UniRule"/>
</dbReference>
<dbReference type="Gene3D" id="3.10.20.10">
    <property type="match status" value="1"/>
</dbReference>
<dbReference type="Gene3D" id="3.40.140.10">
    <property type="entry name" value="Cytidine Deaminase, domain 2"/>
    <property type="match status" value="1"/>
</dbReference>
<dbReference type="HAMAP" id="MF_00187">
    <property type="entry name" value="FdhD"/>
    <property type="match status" value="1"/>
</dbReference>
<dbReference type="InterPro" id="IPR016193">
    <property type="entry name" value="Cytidine_deaminase-like"/>
</dbReference>
<dbReference type="InterPro" id="IPR003786">
    <property type="entry name" value="FdhD"/>
</dbReference>
<dbReference type="NCBIfam" id="TIGR00129">
    <property type="entry name" value="fdhD_narQ"/>
    <property type="match status" value="1"/>
</dbReference>
<dbReference type="PANTHER" id="PTHR30592">
    <property type="entry name" value="FORMATE DEHYDROGENASE"/>
    <property type="match status" value="1"/>
</dbReference>
<dbReference type="PANTHER" id="PTHR30592:SF1">
    <property type="entry name" value="SULFUR CARRIER PROTEIN FDHD"/>
    <property type="match status" value="1"/>
</dbReference>
<dbReference type="Pfam" id="PF02634">
    <property type="entry name" value="FdhD-NarQ"/>
    <property type="match status" value="1"/>
</dbReference>
<dbReference type="PIRSF" id="PIRSF015626">
    <property type="entry name" value="FdhD"/>
    <property type="match status" value="1"/>
</dbReference>
<dbReference type="SUPFAM" id="SSF53927">
    <property type="entry name" value="Cytidine deaminase-like"/>
    <property type="match status" value="1"/>
</dbReference>
<keyword id="KW-0963">Cytoplasm</keyword>
<keyword id="KW-0501">Molybdenum cofactor biosynthesis</keyword>
<organism>
    <name type="scientific">Picrophilus torridus (strain ATCC 700027 / DSM 9790 / JCM 10055 / NBRC 100828 / KAW 2/3)</name>
    <dbReference type="NCBI Taxonomy" id="1122961"/>
    <lineage>
        <taxon>Archaea</taxon>
        <taxon>Methanobacteriati</taxon>
        <taxon>Thermoplasmatota</taxon>
        <taxon>Thermoplasmata</taxon>
        <taxon>Thermoplasmatales</taxon>
        <taxon>Picrophilaceae</taxon>
        <taxon>Picrophilus</taxon>
    </lineage>
</organism>
<accession>Q6L080</accession>
<gene>
    <name evidence="1" type="primary">fdhD</name>
    <name type="ordered locus">PTO1037</name>
</gene>
<reference key="1">
    <citation type="journal article" date="2004" name="Proc. Natl. Acad. Sci. U.S.A.">
        <title>Genome sequence of Picrophilus torridus and its implications for life around pH 0.</title>
        <authorList>
            <person name="Fuetterer O."/>
            <person name="Angelov A."/>
            <person name="Liesegang H."/>
            <person name="Gottschalk G."/>
            <person name="Schleper C."/>
            <person name="Schepers B."/>
            <person name="Dock C."/>
            <person name="Antranikian G."/>
            <person name="Liebl W."/>
        </authorList>
    </citation>
    <scope>NUCLEOTIDE SEQUENCE [LARGE SCALE GENOMIC DNA]</scope>
    <source>
        <strain>ATCC 700027 / DSM 9790 / JCM 10055 / NBRC 100828 / KAW 2/3</strain>
    </source>
</reference>
<protein>
    <recommendedName>
        <fullName evidence="1">Sulfur carrier protein FdhD</fullName>
    </recommendedName>
</protein>
<comment type="function">
    <text evidence="1">Required for formate dehydrogenase (FDH) activity. Acts as a sulfur carrier protein that transfers sulfur from IscS to the molybdenum cofactor prior to its insertion into FDH.</text>
</comment>
<comment type="subcellular location">
    <subcellularLocation>
        <location evidence="1">Cytoplasm</location>
    </subcellularLocation>
</comment>
<comment type="similarity">
    <text evidence="1">Belongs to the FdhD family.</text>
</comment>
<name>FDHD_PICTO</name>
<sequence>MMPYISKNAVIIGRDRKFITDNVTVEEPLQISIENENRIYNVSVIMRTPVDDEALATGFLVNEGIIEPDKIIKVSKRSENNVCVSVESFNEDLLKNRNFYVNSSCGVCGKTDIENVFIKSHGIVRSQSRTDHSIILGLPDKMMKNQKIFSYTGGIHAAALFDLNGNMISISEDIGRHNAVDKTIGKMILKNVYRMEDSILQVSGRAGFEILQKASMFGVSIVSSVSAPSSLAIDVAETFNITLISFVRKNRMNIYSHPERIL</sequence>